<protein>
    <recommendedName>
        <fullName evidence="1">Large ribosomal subunit protein uL15</fullName>
    </recommendedName>
    <alternativeName>
        <fullName evidence="3">50S ribosomal protein L15</fullName>
    </alternativeName>
</protein>
<gene>
    <name evidence="1" type="primary">rplO</name>
    <name type="ordered locus">TT_C1309</name>
</gene>
<comment type="function">
    <text evidence="1">Binds to the 23S rRNA.</text>
</comment>
<comment type="subunit">
    <text>Part of the 50S ribosomal subunit.</text>
</comment>
<comment type="similarity">
    <text evidence="1">Belongs to the universal ribosomal protein uL15 family.</text>
</comment>
<reference key="1">
    <citation type="journal article" date="2004" name="Nat. Biotechnol.">
        <title>The genome sequence of the extreme thermophile Thermus thermophilus.</title>
        <authorList>
            <person name="Henne A."/>
            <person name="Brueggemann H."/>
            <person name="Raasch C."/>
            <person name="Wiezer A."/>
            <person name="Hartsch T."/>
            <person name="Liesegang H."/>
            <person name="Johann A."/>
            <person name="Lienard T."/>
            <person name="Gohl O."/>
            <person name="Martinez-Arias R."/>
            <person name="Jacobi C."/>
            <person name="Starkuviene V."/>
            <person name="Schlenczeck S."/>
            <person name="Dencker S."/>
            <person name="Huber R."/>
            <person name="Klenk H.-P."/>
            <person name="Kramer W."/>
            <person name="Merkl R."/>
            <person name="Gottschalk G."/>
            <person name="Fritz H.-J."/>
        </authorList>
    </citation>
    <scope>NUCLEOTIDE SEQUENCE [LARGE SCALE GENOMIC DNA]</scope>
    <source>
        <strain>ATCC BAA-163 / DSM 7039 / HB27</strain>
    </source>
</reference>
<proteinExistence type="evidence at protein level"/>
<keyword id="KW-0002">3D-structure</keyword>
<keyword id="KW-0687">Ribonucleoprotein</keyword>
<keyword id="KW-0689">Ribosomal protein</keyword>
<keyword id="KW-0694">RNA-binding</keyword>
<keyword id="KW-0699">rRNA-binding</keyword>
<accession>Q72I23</accession>
<dbReference type="EMBL" id="AE017221">
    <property type="protein sequence ID" value="AAS81651.1"/>
    <property type="molecule type" value="Genomic_DNA"/>
</dbReference>
<dbReference type="RefSeq" id="WP_011173703.1">
    <property type="nucleotide sequence ID" value="NC_005835.1"/>
</dbReference>
<dbReference type="PDB" id="4V4I">
    <property type="method" value="X-ray"/>
    <property type="resolution" value="3.71 A"/>
    <property type="chains" value="J=1-150"/>
</dbReference>
<dbReference type="PDB" id="4V4J">
    <property type="method" value="X-ray"/>
    <property type="resolution" value="3.83 A"/>
    <property type="chains" value="J=1-150"/>
</dbReference>
<dbReference type="PDB" id="4V63">
    <property type="method" value="X-ray"/>
    <property type="resolution" value="3.21 A"/>
    <property type="chains" value="BP/DP=1-150"/>
</dbReference>
<dbReference type="PDB" id="4V67">
    <property type="method" value="X-ray"/>
    <property type="resolution" value="3.00 A"/>
    <property type="chains" value="BP/DP=1-150"/>
</dbReference>
<dbReference type="PDB" id="4V7P">
    <property type="method" value="X-ray"/>
    <property type="resolution" value="3.62 A"/>
    <property type="chains" value="BL/CL=1-150"/>
</dbReference>
<dbReference type="PDB" id="4V83">
    <property type="method" value="X-ray"/>
    <property type="resolution" value="3.50 A"/>
    <property type="chains" value="BL/DL=5-150"/>
</dbReference>
<dbReference type="PDB" id="4V84">
    <property type="method" value="X-ray"/>
    <property type="resolution" value="3.40 A"/>
    <property type="chains" value="BL/DL=5-150"/>
</dbReference>
<dbReference type="PDB" id="4V9J">
    <property type="method" value="X-ray"/>
    <property type="resolution" value="3.86 A"/>
    <property type="chains" value="BP/DP=5-150"/>
</dbReference>
<dbReference type="PDB" id="4V9K">
    <property type="method" value="X-ray"/>
    <property type="resolution" value="3.50 A"/>
    <property type="chains" value="BP/DP=5-150"/>
</dbReference>
<dbReference type="PDB" id="4V9L">
    <property type="method" value="X-ray"/>
    <property type="resolution" value="3.50 A"/>
    <property type="chains" value="BP/DP=5-150"/>
</dbReference>
<dbReference type="PDB" id="4V9M">
    <property type="method" value="X-ray"/>
    <property type="resolution" value="4.00 A"/>
    <property type="chains" value="BP/DP=5-150"/>
</dbReference>
<dbReference type="PDB" id="4V9N">
    <property type="method" value="X-ray"/>
    <property type="resolution" value="3.40 A"/>
    <property type="chains" value="BP/DP=5-150"/>
</dbReference>
<dbReference type="PDB" id="4V9Q">
    <property type="method" value="X-ray"/>
    <property type="resolution" value="3.40 A"/>
    <property type="chains" value="AL/CL=5-150"/>
</dbReference>
<dbReference type="PDB" id="4W29">
    <property type="method" value="X-ray"/>
    <property type="resolution" value="3.80 A"/>
    <property type="chains" value="BP/DP=5-150"/>
</dbReference>
<dbReference type="PDB" id="4XEJ">
    <property type="method" value="X-ray"/>
    <property type="resolution" value="3.80 A"/>
    <property type="chains" value="AL15/BL15=5-150"/>
</dbReference>
<dbReference type="PDB" id="5J4D">
    <property type="method" value="X-ray"/>
    <property type="resolution" value="3.10 A"/>
    <property type="chains" value="M/RB=1-150"/>
</dbReference>
<dbReference type="PDB" id="5V8I">
    <property type="method" value="X-ray"/>
    <property type="resolution" value="3.25 A"/>
    <property type="chains" value="1P/2P=1-150"/>
</dbReference>
<dbReference type="PDB" id="6B4V">
    <property type="method" value="X-ray"/>
    <property type="resolution" value="3.40 A"/>
    <property type="chains" value="M/QB=1-150"/>
</dbReference>
<dbReference type="PDB" id="6BOH">
    <property type="method" value="X-ray"/>
    <property type="resolution" value="3.40 A"/>
    <property type="chains" value="M/RB=1-150"/>
</dbReference>
<dbReference type="PDB" id="6BOK">
    <property type="method" value="X-ray"/>
    <property type="resolution" value="3.55 A"/>
    <property type="chains" value="M/PB=1-150"/>
</dbReference>
<dbReference type="PDB" id="6N1D">
    <property type="method" value="X-ray"/>
    <property type="resolution" value="3.20 A"/>
    <property type="chains" value="AL15/BL15=1-150"/>
</dbReference>
<dbReference type="PDBsum" id="4V4I"/>
<dbReference type="PDBsum" id="4V4J"/>
<dbReference type="PDBsum" id="4V63"/>
<dbReference type="PDBsum" id="4V67"/>
<dbReference type="PDBsum" id="4V7P"/>
<dbReference type="PDBsum" id="4V83"/>
<dbReference type="PDBsum" id="4V84"/>
<dbReference type="PDBsum" id="4V9J"/>
<dbReference type="PDBsum" id="4V9K"/>
<dbReference type="PDBsum" id="4V9L"/>
<dbReference type="PDBsum" id="4V9M"/>
<dbReference type="PDBsum" id="4V9N"/>
<dbReference type="PDBsum" id="4V9Q"/>
<dbReference type="PDBsum" id="4W29"/>
<dbReference type="PDBsum" id="4XEJ"/>
<dbReference type="PDBsum" id="5J4D"/>
<dbReference type="PDBsum" id="5V8I"/>
<dbReference type="PDBsum" id="6B4V"/>
<dbReference type="PDBsum" id="6BOH"/>
<dbReference type="PDBsum" id="6BOK"/>
<dbReference type="PDBsum" id="6N1D"/>
<dbReference type="SMR" id="Q72I23"/>
<dbReference type="IntAct" id="Q72I23">
    <property type="interactions" value="4"/>
</dbReference>
<dbReference type="GeneID" id="3168730"/>
<dbReference type="KEGG" id="tth:TT_C1309"/>
<dbReference type="eggNOG" id="COG0200">
    <property type="taxonomic scope" value="Bacteria"/>
</dbReference>
<dbReference type="HOGENOM" id="CLU_055188_4_2_0"/>
<dbReference type="OrthoDB" id="9810293at2"/>
<dbReference type="Proteomes" id="UP000000592">
    <property type="component" value="Chromosome"/>
</dbReference>
<dbReference type="GO" id="GO:0022625">
    <property type="term" value="C:cytosolic large ribosomal subunit"/>
    <property type="evidence" value="ECO:0007669"/>
    <property type="project" value="TreeGrafter"/>
</dbReference>
<dbReference type="GO" id="GO:0019843">
    <property type="term" value="F:rRNA binding"/>
    <property type="evidence" value="ECO:0007669"/>
    <property type="project" value="UniProtKB-UniRule"/>
</dbReference>
<dbReference type="GO" id="GO:0003735">
    <property type="term" value="F:structural constituent of ribosome"/>
    <property type="evidence" value="ECO:0007669"/>
    <property type="project" value="InterPro"/>
</dbReference>
<dbReference type="GO" id="GO:0006412">
    <property type="term" value="P:translation"/>
    <property type="evidence" value="ECO:0007669"/>
    <property type="project" value="UniProtKB-UniRule"/>
</dbReference>
<dbReference type="Gene3D" id="3.100.10.10">
    <property type="match status" value="1"/>
</dbReference>
<dbReference type="HAMAP" id="MF_01341">
    <property type="entry name" value="Ribosomal_uL15"/>
    <property type="match status" value="1"/>
</dbReference>
<dbReference type="InterPro" id="IPR030878">
    <property type="entry name" value="Ribosomal_uL15"/>
</dbReference>
<dbReference type="InterPro" id="IPR021131">
    <property type="entry name" value="Ribosomal_uL15/eL18"/>
</dbReference>
<dbReference type="InterPro" id="IPR036227">
    <property type="entry name" value="Ribosomal_uL15/eL18_sf"/>
</dbReference>
<dbReference type="InterPro" id="IPR005749">
    <property type="entry name" value="Ribosomal_uL15_bac-type"/>
</dbReference>
<dbReference type="InterPro" id="IPR001196">
    <property type="entry name" value="Ribosomal_uL15_CS"/>
</dbReference>
<dbReference type="NCBIfam" id="TIGR01071">
    <property type="entry name" value="rplO_bact"/>
    <property type="match status" value="1"/>
</dbReference>
<dbReference type="PANTHER" id="PTHR12934">
    <property type="entry name" value="50S RIBOSOMAL PROTEIN L15"/>
    <property type="match status" value="1"/>
</dbReference>
<dbReference type="PANTHER" id="PTHR12934:SF11">
    <property type="entry name" value="LARGE RIBOSOMAL SUBUNIT PROTEIN UL15M"/>
    <property type="match status" value="1"/>
</dbReference>
<dbReference type="Pfam" id="PF00828">
    <property type="entry name" value="Ribosomal_L27A"/>
    <property type="match status" value="1"/>
</dbReference>
<dbReference type="SUPFAM" id="SSF52080">
    <property type="entry name" value="Ribosomal proteins L15p and L18e"/>
    <property type="match status" value="1"/>
</dbReference>
<dbReference type="PROSITE" id="PS00475">
    <property type="entry name" value="RIBOSOMAL_L15"/>
    <property type="match status" value="1"/>
</dbReference>
<evidence type="ECO:0000255" key="1">
    <source>
        <dbReference type="HAMAP-Rule" id="MF_01341"/>
    </source>
</evidence>
<evidence type="ECO:0000256" key="2">
    <source>
        <dbReference type="SAM" id="MobiDB-lite"/>
    </source>
</evidence>
<evidence type="ECO:0000305" key="3"/>
<evidence type="ECO:0007829" key="4">
    <source>
        <dbReference type="PDB" id="4V63"/>
    </source>
</evidence>
<evidence type="ECO:0007829" key="5">
    <source>
        <dbReference type="PDB" id="4V67"/>
    </source>
</evidence>
<evidence type="ECO:0007829" key="6">
    <source>
        <dbReference type="PDB" id="4V84"/>
    </source>
</evidence>
<evidence type="ECO:0007829" key="7">
    <source>
        <dbReference type="PDB" id="4V9K"/>
    </source>
</evidence>
<evidence type="ECO:0007829" key="8">
    <source>
        <dbReference type="PDB" id="4V9N"/>
    </source>
</evidence>
<name>RL15_THET2</name>
<organism>
    <name type="scientific">Thermus thermophilus (strain ATCC BAA-163 / DSM 7039 / HB27)</name>
    <dbReference type="NCBI Taxonomy" id="262724"/>
    <lineage>
        <taxon>Bacteria</taxon>
        <taxon>Thermotogati</taxon>
        <taxon>Deinococcota</taxon>
        <taxon>Deinococci</taxon>
        <taxon>Thermales</taxon>
        <taxon>Thermaceae</taxon>
        <taxon>Thermus</taxon>
    </lineage>
</organism>
<sequence>MKLSDLRPNPGANKRRKRVGRGPGSGHGKTATRGHKGQKSRSGGLKDPRRFEGGRSTTLMRLPKRGMQGQVPGEIKRPRYQGVNLKDLARFEGEVTPELLVRAGLLKKGYRLKILGEGEAKPLKVVAHAFSKSALEKLKAAGGEPVLLEA</sequence>
<feature type="chain" id="PRO_0000104845" description="Large ribosomal subunit protein uL15">
    <location>
        <begin position="1"/>
        <end position="150"/>
    </location>
</feature>
<feature type="region of interest" description="Disordered" evidence="2">
    <location>
        <begin position="1"/>
        <end position="60"/>
    </location>
</feature>
<feature type="compositionally biased region" description="Basic residues" evidence="2">
    <location>
        <begin position="30"/>
        <end position="39"/>
    </location>
</feature>
<feature type="compositionally biased region" description="Basic and acidic residues" evidence="2">
    <location>
        <begin position="44"/>
        <end position="53"/>
    </location>
</feature>
<feature type="strand" evidence="5">
    <location>
        <begin position="7"/>
        <end position="9"/>
    </location>
</feature>
<feature type="strand" evidence="5">
    <location>
        <begin position="24"/>
        <end position="29"/>
    </location>
</feature>
<feature type="turn" evidence="7">
    <location>
        <begin position="31"/>
        <end position="33"/>
    </location>
</feature>
<feature type="strand" evidence="5">
    <location>
        <begin position="37"/>
        <end position="40"/>
    </location>
</feature>
<feature type="strand" evidence="6">
    <location>
        <begin position="49"/>
        <end position="51"/>
    </location>
</feature>
<feature type="strand" evidence="5">
    <location>
        <begin position="53"/>
        <end position="55"/>
    </location>
</feature>
<feature type="turn" evidence="8">
    <location>
        <begin position="57"/>
        <end position="60"/>
    </location>
</feature>
<feature type="strand" evidence="5">
    <location>
        <begin position="80"/>
        <end position="84"/>
    </location>
</feature>
<feature type="helix" evidence="5">
    <location>
        <begin position="85"/>
        <end position="89"/>
    </location>
</feature>
<feature type="strand" evidence="5">
    <location>
        <begin position="93"/>
        <end position="95"/>
    </location>
</feature>
<feature type="helix" evidence="5">
    <location>
        <begin position="97"/>
        <end position="101"/>
    </location>
</feature>
<feature type="turn" evidence="5">
    <location>
        <begin position="102"/>
        <end position="104"/>
    </location>
</feature>
<feature type="strand" evidence="5">
    <location>
        <begin position="111"/>
        <end position="118"/>
    </location>
</feature>
<feature type="strand" evidence="5">
    <location>
        <begin position="122"/>
        <end position="125"/>
    </location>
</feature>
<feature type="strand" evidence="4">
    <location>
        <begin position="128"/>
        <end position="130"/>
    </location>
</feature>
<feature type="helix" evidence="5">
    <location>
        <begin position="132"/>
        <end position="139"/>
    </location>
</feature>
<feature type="strand" evidence="4">
    <location>
        <begin position="141"/>
        <end position="143"/>
    </location>
</feature>